<keyword id="KW-1003">Cell membrane</keyword>
<keyword id="KW-0449">Lipoprotein</keyword>
<keyword id="KW-0472">Membrane</keyword>
<keyword id="KW-0564">Palmitate</keyword>
<keyword id="KW-0646">Protease inhibitor</keyword>
<keyword id="KW-1185">Reference proteome</keyword>
<keyword id="KW-0732">Signal</keyword>
<keyword id="KW-0882">Thioester bond</keyword>
<proteinExistence type="inferred from homology"/>
<accession>Q9CMZ1</accession>
<organism>
    <name type="scientific">Pasteurella multocida (strain Pm70)</name>
    <dbReference type="NCBI Taxonomy" id="272843"/>
    <lineage>
        <taxon>Bacteria</taxon>
        <taxon>Pseudomonadati</taxon>
        <taxon>Pseudomonadota</taxon>
        <taxon>Gammaproteobacteria</taxon>
        <taxon>Pasteurellales</taxon>
        <taxon>Pasteurellaceae</taxon>
        <taxon>Pasteurella</taxon>
    </lineage>
</organism>
<dbReference type="EMBL" id="AE004439">
    <property type="protein sequence ID" value="AAK02743.1"/>
    <property type="molecule type" value="Genomic_DNA"/>
</dbReference>
<dbReference type="RefSeq" id="WP_010906778.1">
    <property type="nucleotide sequence ID" value="NC_002663.1"/>
</dbReference>
<dbReference type="SMR" id="Q9CMZ1"/>
<dbReference type="STRING" id="272843.PM0659"/>
<dbReference type="EnsemblBacteria" id="AAK02743">
    <property type="protein sequence ID" value="AAK02743"/>
    <property type="gene ID" value="PM0659"/>
</dbReference>
<dbReference type="KEGG" id="pmu:PM0659"/>
<dbReference type="PATRIC" id="fig|272843.6.peg.667"/>
<dbReference type="HOGENOM" id="CLU_000965_2_0_6"/>
<dbReference type="OrthoDB" id="9767116at2"/>
<dbReference type="Proteomes" id="UP000000809">
    <property type="component" value="Chromosome"/>
</dbReference>
<dbReference type="GO" id="GO:0005886">
    <property type="term" value="C:plasma membrane"/>
    <property type="evidence" value="ECO:0007669"/>
    <property type="project" value="UniProtKB-SubCell"/>
</dbReference>
<dbReference type="GO" id="GO:0004866">
    <property type="term" value="F:endopeptidase inhibitor activity"/>
    <property type="evidence" value="ECO:0007669"/>
    <property type="project" value="InterPro"/>
</dbReference>
<dbReference type="CDD" id="cd02891">
    <property type="entry name" value="A2M_like"/>
    <property type="match status" value="1"/>
</dbReference>
<dbReference type="Gene3D" id="1.50.10.20">
    <property type="match status" value="1"/>
</dbReference>
<dbReference type="Gene3D" id="2.60.40.1930">
    <property type="match status" value="1"/>
</dbReference>
<dbReference type="Gene3D" id="2.60.40.3710">
    <property type="match status" value="1"/>
</dbReference>
<dbReference type="InterPro" id="IPR011625">
    <property type="entry name" value="A2M_N_BRD"/>
</dbReference>
<dbReference type="InterPro" id="IPR021868">
    <property type="entry name" value="Alpha_2_Macroglob_MG3"/>
</dbReference>
<dbReference type="InterPro" id="IPR041203">
    <property type="entry name" value="Bact_A2M_MG5"/>
</dbReference>
<dbReference type="InterPro" id="IPR041462">
    <property type="entry name" value="Bact_A2M_MG6"/>
</dbReference>
<dbReference type="InterPro" id="IPR041246">
    <property type="entry name" value="Bact_MG10"/>
</dbReference>
<dbReference type="InterPro" id="IPR001599">
    <property type="entry name" value="Macroglobln_a2"/>
</dbReference>
<dbReference type="InterPro" id="IPR002890">
    <property type="entry name" value="MG2"/>
</dbReference>
<dbReference type="InterPro" id="IPR008930">
    <property type="entry name" value="Terpenoid_cyclase/PrenylTrfase"/>
</dbReference>
<dbReference type="InterPro" id="IPR051802">
    <property type="entry name" value="YfhM-like"/>
</dbReference>
<dbReference type="PANTHER" id="PTHR40094">
    <property type="entry name" value="ALPHA-2-MACROGLOBULIN HOMOLOG"/>
    <property type="match status" value="1"/>
</dbReference>
<dbReference type="PANTHER" id="PTHR40094:SF1">
    <property type="entry name" value="UBIQUITIN DOMAIN-CONTAINING PROTEIN"/>
    <property type="match status" value="1"/>
</dbReference>
<dbReference type="Pfam" id="PF00207">
    <property type="entry name" value="A2M"/>
    <property type="match status" value="1"/>
</dbReference>
<dbReference type="Pfam" id="PF07703">
    <property type="entry name" value="A2M_BRD"/>
    <property type="match status" value="1"/>
</dbReference>
<dbReference type="Pfam" id="PF17973">
    <property type="entry name" value="bMG10"/>
    <property type="match status" value="1"/>
</dbReference>
<dbReference type="Pfam" id="PF11974">
    <property type="entry name" value="bMG3"/>
    <property type="match status" value="1"/>
</dbReference>
<dbReference type="Pfam" id="PF17972">
    <property type="entry name" value="bMG5"/>
    <property type="match status" value="1"/>
</dbReference>
<dbReference type="Pfam" id="PF17962">
    <property type="entry name" value="bMG6"/>
    <property type="match status" value="1"/>
</dbReference>
<dbReference type="Pfam" id="PF01835">
    <property type="entry name" value="MG2"/>
    <property type="match status" value="1"/>
</dbReference>
<dbReference type="SMART" id="SM01360">
    <property type="entry name" value="A2M"/>
    <property type="match status" value="1"/>
</dbReference>
<dbReference type="SMART" id="SM01359">
    <property type="entry name" value="A2M_N_2"/>
    <property type="match status" value="1"/>
</dbReference>
<dbReference type="SUPFAM" id="SSF48239">
    <property type="entry name" value="Terpenoid cyclases/Protein prenyltransferases"/>
    <property type="match status" value="1"/>
</dbReference>
<dbReference type="PROSITE" id="PS51257">
    <property type="entry name" value="PROKAR_LIPOPROTEIN"/>
    <property type="match status" value="1"/>
</dbReference>
<evidence type="ECO:0000250" key="1">
    <source>
        <dbReference type="UniProtKB" id="P76578"/>
    </source>
</evidence>
<evidence type="ECO:0000255" key="2">
    <source>
        <dbReference type="PROSITE-ProRule" id="PRU00303"/>
    </source>
</evidence>
<evidence type="ECO:0000305" key="3"/>
<feature type="signal peptide" evidence="2">
    <location>
        <begin position="1"/>
        <end position="21"/>
    </location>
</feature>
<feature type="chain" id="PRO_0000036241" description="Alpha-2-macroglobulin" evidence="2">
    <location>
        <begin position="22"/>
        <end position="1905"/>
    </location>
</feature>
<feature type="lipid moiety-binding region" description="N-palmitoyl cysteine" evidence="2">
    <location>
        <position position="22"/>
    </location>
</feature>
<feature type="lipid moiety-binding region" description="S-diacylglycerol cysteine" evidence="2">
    <location>
        <position position="22"/>
    </location>
</feature>
<feature type="cross-link" description="Isoglutamyl cysteine thioester (Cys-Gln)" evidence="1">
    <location>
        <begin position="1438"/>
        <end position="1441"/>
    </location>
</feature>
<gene>
    <name type="ordered locus">PM0659</name>
</gene>
<sequence length="1905" mass="214429">MNKQYFLSLFSTLAVALTLSGCWDKKQDEANAIQFNVNPIEITNYDETPKEVYPLVISFSGPAAPITSVNKELTQGISIEPALKGKWVWNSDTLLSFKPETDWPTGQDYRVKIDKKILNPQLHYTQKLNEPVVFKTPEFKATLVEQYFHQDPTQAQVRHAIFKLSFTHPVDRQKFEKALQVNLVRKNNDNTQNILSPLKFNVRYGEKDLVAWVNSDNVALAQSDNQYIEVKIDKNLTALLGNNSLETDIISSVKVPTKYSLDFSTGILIAQNEKNEAEQVLHLNFTHSIKGNELEKHISAYLLPEFTPENHPHWRYNLISRDVLQHAVAVPLQRLATETTYANQQSFKLDIPEKRCLYIEVQNKITALGGYEMKGALGDLACAPDYPKYVGFVGKGSILSSIGERKVTIATRNFTKVKLEIGRIQEEQLRHLIALNQGNFQNPDLGQLKIDNIADFFTKNYTLNNKKPQETTYLGIDLEKIVKQAEPAMGIYWLKVTGDSDNPNSTLRDTSQHMDWRNDASNQFSDYRLIVISDLGVIAKKAVDGTQSVFVQSISRGEPVEGATVSVISRNGSIIKSDYTNEQGVVNFSSLAHFKQELAPVMYLVSTQESLSFLPIDKYDRNLDYSRFDVGGIYASENAASLKAYLFNDRGIYRPNETLHTGIITKAQDWQLALNNIPLQFNLYSPSGMLMHKQTIRLEKSGLNSVSFTLPETAETGEWFAELLVTEKNNQTEIGSMTFQVQEFQPDNLKIKTTFNQAHAEGWVAPQDLVATVQLANLFGTPAQNRKVQANLTLQPLLPKFSQYADYRFFDNQRNKSAILYETELNEQVTDKEGKAHFPIDLTQYAENTAQMLYFTADGFENDSGRAVSTVKSVMVSAQPWLIGYQTKNDLAYLKRNTPAVVNFIAVNPKLEKVAVEHLKATLLERKYVSVLTQQASGAYKYESKLIENEIEQTTLQINATGTDFTLNTGKSGDYVLVLSNEHDQEVNRIHYAVIGNQNVSVAMDKNTELKLRLNKKQFKPHEEIEIAIHAPYAGTGLITIESDRVYAHKWFKATTNSSVQRIQLPENFEGTGYVNVQFSRDIHSDDIFTSPLSYGVVPFTVNVDNRRLKLQLDSPKKVKSGETVEFKLSSDKPSKALIYAVNEGILQVAGYQFTDPLSYFFPKYALQVQTAQILDLILPEFSKVMQFAQTGGDADMNMELAMKMAMANMNPFKRKTDKPVAYWSGIVDIHGEKTVSYQIPEEFNGNLKVMAIALSHDGKHLGHVATETLVRNDLILSPTVPLTLTPGDESEINVVIANNTNKAQRVNLKATLEPQLSFIGEAEKVIDIAPMSESRADFVIKATQELGSSTIRFIASYEDAQQQKVDAVRHVTLSVRPIMPKQFATQIQKVAAGKTVTSPLPMTLFPQHRQQSALFSAAPLALAQGVSTYLTHYDNYCTEQMISAAMPMVLFSKNPAYQPLLTALSRKAPQNVGSTGTHDTLEKAFKLLPSRQTEYGNYGIWNNVEEGNLFVTAYVAHFLIEARERHLVLPKAWFGQHGLFNNTISALEEQSVPQEGDSLATLRQRAYSAYLLTRLAKVPSNALLSIRTQLEQQFSAEEWQKDTVSAWLAAAYHMLKQDNEANKLIEPVINQLVAARPAQWTYDAYSDPLIKDSTMLYVIARHFPAQLSKVSDSVLERIVQDLNQQRYNTLSSSMVLLALDAYAQQHQSELANLQIQHQGKEISQSTPLFRFADLADTQMDISFVNNSQQPAWFALSQVGYPQNAAQQALSQGLEVDRSYTDKEGKPIRQVKIGDVIYVTVKIRASTDYVSDVIITDLYPAGFEVLWQQGAEDDFEDSWLAQHTELREDRLLSYLDAEKEMKVLKYQLKAVNIGTFQIPPIYAESMYDRAIKAYSASEGQIKVRK</sequence>
<protein>
    <recommendedName>
        <fullName evidence="1">Alpha-2-macroglobulin</fullName>
    </recommendedName>
</protein>
<reference key="1">
    <citation type="journal article" date="2001" name="Proc. Natl. Acad. Sci. U.S.A.">
        <title>Complete genomic sequence of Pasteurella multocida Pm70.</title>
        <authorList>
            <person name="May B.J."/>
            <person name="Zhang Q."/>
            <person name="Li L.L."/>
            <person name="Paustian M.L."/>
            <person name="Whittam T.S."/>
            <person name="Kapur V."/>
        </authorList>
    </citation>
    <scope>NUCLEOTIDE SEQUENCE [LARGE SCALE GENOMIC DNA]</scope>
    <source>
        <strain>Pm70</strain>
    </source>
</reference>
<name>A2MG_PASMU</name>
<comment type="function">
    <text evidence="1">Protects the bacterial cell from host peptidases.</text>
</comment>
<comment type="subcellular location">
    <subcellularLocation>
        <location evidence="2">Cell membrane</location>
        <topology evidence="2">Lipid-anchor</topology>
    </subcellularLocation>
</comment>
<comment type="similarity">
    <text evidence="3">Belongs to the protease inhibitor I39 (alpha-2-macroglobulin) family. Bacterial alpha-2-macroglobulin subfamily.</text>
</comment>